<gene>
    <name evidence="1" type="primary">rsmJ</name>
    <name type="ordered locus">NMCC_1513</name>
</gene>
<reference key="1">
    <citation type="journal article" date="2008" name="Genomics">
        <title>Characterization of ST-4821 complex, a unique Neisseria meningitidis clone.</title>
        <authorList>
            <person name="Peng J."/>
            <person name="Yang L."/>
            <person name="Yang F."/>
            <person name="Yang J."/>
            <person name="Yan Y."/>
            <person name="Nie H."/>
            <person name="Zhang X."/>
            <person name="Xiong Z."/>
            <person name="Jiang Y."/>
            <person name="Cheng F."/>
            <person name="Xu X."/>
            <person name="Chen S."/>
            <person name="Sun L."/>
            <person name="Li W."/>
            <person name="Shen Y."/>
            <person name="Shao Z."/>
            <person name="Liang X."/>
            <person name="Xu J."/>
            <person name="Jin Q."/>
        </authorList>
    </citation>
    <scope>NUCLEOTIDE SEQUENCE [LARGE SCALE GENOMIC DNA]</scope>
    <source>
        <strain>053442</strain>
    </source>
</reference>
<comment type="function">
    <text evidence="1">Specifically methylates the guanosine in position 1516 of 16S rRNA.</text>
</comment>
<comment type="catalytic activity">
    <reaction evidence="1">
        <text>guanosine(1516) in 16S rRNA + S-adenosyl-L-methionine = N(2)-methylguanosine(1516) in 16S rRNA + S-adenosyl-L-homocysteine + H(+)</text>
        <dbReference type="Rhea" id="RHEA:43220"/>
        <dbReference type="Rhea" id="RHEA-COMP:10412"/>
        <dbReference type="Rhea" id="RHEA-COMP:10413"/>
        <dbReference type="ChEBI" id="CHEBI:15378"/>
        <dbReference type="ChEBI" id="CHEBI:57856"/>
        <dbReference type="ChEBI" id="CHEBI:59789"/>
        <dbReference type="ChEBI" id="CHEBI:74269"/>
        <dbReference type="ChEBI" id="CHEBI:74481"/>
        <dbReference type="EC" id="2.1.1.242"/>
    </reaction>
</comment>
<comment type="subcellular location">
    <subcellularLocation>
        <location evidence="1">Cytoplasm</location>
    </subcellularLocation>
</comment>
<comment type="similarity">
    <text evidence="1">Belongs to the methyltransferase superfamily. RsmJ family.</text>
</comment>
<organism>
    <name type="scientific">Neisseria meningitidis serogroup C (strain 053442)</name>
    <dbReference type="NCBI Taxonomy" id="374833"/>
    <lineage>
        <taxon>Bacteria</taxon>
        <taxon>Pseudomonadati</taxon>
        <taxon>Pseudomonadota</taxon>
        <taxon>Betaproteobacteria</taxon>
        <taxon>Neisseriales</taxon>
        <taxon>Neisseriaceae</taxon>
        <taxon>Neisseria</taxon>
    </lineage>
</organism>
<proteinExistence type="inferred from homology"/>
<dbReference type="EC" id="2.1.1.242" evidence="1"/>
<dbReference type="EMBL" id="CP000381">
    <property type="protein sequence ID" value="ABX73671.1"/>
    <property type="molecule type" value="Genomic_DNA"/>
</dbReference>
<dbReference type="RefSeq" id="WP_002246323.1">
    <property type="nucleotide sequence ID" value="NC_010120.1"/>
</dbReference>
<dbReference type="SMR" id="A9M1A6"/>
<dbReference type="KEGG" id="nmn:NMCC_1513"/>
<dbReference type="HOGENOM" id="CLU_076324_1_0_4"/>
<dbReference type="Proteomes" id="UP000001177">
    <property type="component" value="Chromosome"/>
</dbReference>
<dbReference type="GO" id="GO:0005737">
    <property type="term" value="C:cytoplasm"/>
    <property type="evidence" value="ECO:0007669"/>
    <property type="project" value="UniProtKB-SubCell"/>
</dbReference>
<dbReference type="GO" id="GO:0008990">
    <property type="term" value="F:rRNA (guanine-N2-)-methyltransferase activity"/>
    <property type="evidence" value="ECO:0007669"/>
    <property type="project" value="UniProtKB-UniRule"/>
</dbReference>
<dbReference type="Gene3D" id="3.40.50.150">
    <property type="entry name" value="Vaccinia Virus protein VP39"/>
    <property type="match status" value="1"/>
</dbReference>
<dbReference type="Gene3D" id="3.40.1630.10">
    <property type="entry name" value="YhiQ-like domain"/>
    <property type="match status" value="1"/>
</dbReference>
<dbReference type="HAMAP" id="MF_01523">
    <property type="entry name" value="16SrRNA_methyltr_J"/>
    <property type="match status" value="1"/>
</dbReference>
<dbReference type="InterPro" id="IPR007536">
    <property type="entry name" value="16SrRNA_methylTrfase_J"/>
</dbReference>
<dbReference type="InterPro" id="IPR029063">
    <property type="entry name" value="SAM-dependent_MTases_sf"/>
</dbReference>
<dbReference type="PANTHER" id="PTHR36112">
    <property type="entry name" value="RIBOSOMAL RNA SMALL SUBUNIT METHYLTRANSFERASE J"/>
    <property type="match status" value="1"/>
</dbReference>
<dbReference type="PANTHER" id="PTHR36112:SF1">
    <property type="entry name" value="RIBOSOMAL RNA SMALL SUBUNIT METHYLTRANSFERASE J"/>
    <property type="match status" value="1"/>
</dbReference>
<dbReference type="Pfam" id="PF04445">
    <property type="entry name" value="SAM_MT"/>
    <property type="match status" value="1"/>
</dbReference>
<dbReference type="SUPFAM" id="SSF53335">
    <property type="entry name" value="S-adenosyl-L-methionine-dependent methyltransferases"/>
    <property type="match status" value="1"/>
</dbReference>
<keyword id="KW-0963">Cytoplasm</keyword>
<keyword id="KW-0489">Methyltransferase</keyword>
<keyword id="KW-0698">rRNA processing</keyword>
<keyword id="KW-0949">S-adenosyl-L-methionine</keyword>
<keyword id="KW-0808">Transferase</keyword>
<sequence>MTDILIDNTATETVRTLIRAFPLVPVSQPPEQGSYLLAEHDTVSLRLVGEKSSVIVDFASGAAQYRRTKGGGELIAKAVNHTAHPTVWDATAGLGRDSFVLASLGLAVTAFEQHPAVACLLSDGIRRALLNPETQDTAAHINLHFGNAAEQMPALVQTQGKPDIVYLDPMYPERRKSAAVKKEMTYFHRLVGEAQDEAALLHTARQTAKKRVVVKRPRLGEHLAGQAPAYQYTGKSTRFDVYLPYGTDKG</sequence>
<protein>
    <recommendedName>
        <fullName evidence="1">Ribosomal RNA small subunit methyltransferase J</fullName>
        <ecNumber evidence="1">2.1.1.242</ecNumber>
    </recommendedName>
    <alternativeName>
        <fullName evidence="1">16S rRNA m2G1516 methyltransferase</fullName>
    </alternativeName>
    <alternativeName>
        <fullName evidence="1">rRNA (guanine-N(2)-)-methyltransferase</fullName>
    </alternativeName>
</protein>
<name>RSMJ_NEIM0</name>
<accession>A9M1A6</accession>
<evidence type="ECO:0000255" key="1">
    <source>
        <dbReference type="HAMAP-Rule" id="MF_01523"/>
    </source>
</evidence>
<feature type="chain" id="PRO_1000087566" description="Ribosomal RNA small subunit methyltransferase J">
    <location>
        <begin position="1"/>
        <end position="250"/>
    </location>
</feature>
<feature type="binding site" evidence="1">
    <location>
        <begin position="96"/>
        <end position="97"/>
    </location>
    <ligand>
        <name>S-adenosyl-L-methionine</name>
        <dbReference type="ChEBI" id="CHEBI:59789"/>
    </ligand>
</feature>
<feature type="binding site" evidence="1">
    <location>
        <position position="168"/>
    </location>
    <ligand>
        <name>S-adenosyl-L-methionine</name>
        <dbReference type="ChEBI" id="CHEBI:59789"/>
    </ligand>
</feature>